<comment type="subcellular location">
    <subcellularLocation>
        <location>Plastid</location>
        <location>Chloroplast</location>
    </subcellularLocation>
</comment>
<comment type="similarity">
    <text evidence="1">Belongs to the bacterial ribosomal protein bS16 family.</text>
</comment>
<protein>
    <recommendedName>
        <fullName evidence="1">Small ribosomal subunit protein bS16c</fullName>
    </recommendedName>
    <alternativeName>
        <fullName evidence="2">30S ribosomal protein S16, chloroplastic</fullName>
    </alternativeName>
</protein>
<organism>
    <name type="scientific">Nicotiana tabacum</name>
    <name type="common">Common tobacco</name>
    <dbReference type="NCBI Taxonomy" id="4097"/>
    <lineage>
        <taxon>Eukaryota</taxon>
        <taxon>Viridiplantae</taxon>
        <taxon>Streptophyta</taxon>
        <taxon>Embryophyta</taxon>
        <taxon>Tracheophyta</taxon>
        <taxon>Spermatophyta</taxon>
        <taxon>Magnoliopsida</taxon>
        <taxon>eudicotyledons</taxon>
        <taxon>Gunneridae</taxon>
        <taxon>Pentapetalae</taxon>
        <taxon>asterids</taxon>
        <taxon>lamiids</taxon>
        <taxon>Solanales</taxon>
        <taxon>Solanaceae</taxon>
        <taxon>Nicotianoideae</taxon>
        <taxon>Nicotianeae</taxon>
        <taxon>Nicotiana</taxon>
    </lineage>
</organism>
<keyword id="KW-0150">Chloroplast</keyword>
<keyword id="KW-0934">Plastid</keyword>
<keyword id="KW-1185">Reference proteome</keyword>
<keyword id="KW-0687">Ribonucleoprotein</keyword>
<keyword id="KW-0689">Ribosomal protein</keyword>
<reference key="1">
    <citation type="journal article" date="1986" name="EMBO J.">
        <title>The complete nucleotide sequence of the tobacco chloroplast genome: its gene organization and expression.</title>
        <authorList>
            <person name="Shinozaki K."/>
            <person name="Ohme M."/>
            <person name="Tanaka M."/>
            <person name="Wakasugi T."/>
            <person name="Hayashida N."/>
            <person name="Matsubayashi T."/>
            <person name="Zaita N."/>
            <person name="Chunwongse J."/>
            <person name="Obokata J."/>
            <person name="Yamaguchi-Shinozaki K."/>
            <person name="Ohto C."/>
            <person name="Torazawa K."/>
            <person name="Meng B.-Y."/>
            <person name="Sugita M."/>
            <person name="Deno H."/>
            <person name="Kamogashira T."/>
            <person name="Yamada K."/>
            <person name="Kusuda J."/>
            <person name="Takaiwa F."/>
            <person name="Kato A."/>
            <person name="Tohdoh N."/>
            <person name="Shimada H."/>
            <person name="Sugiura M."/>
        </authorList>
    </citation>
    <scope>NUCLEOTIDE SEQUENCE [LARGE SCALE GENOMIC DNA]</scope>
    <source>
        <strain>cv. Bright Yellow 4</strain>
    </source>
</reference>
<reference key="2">
    <citation type="journal article" date="1986" name="Mol. Gen. Genet.">
        <title>Intron in the gene for the ribosomal protein S16 of tobacco chloroplast and its conserved boundary sequences.</title>
        <authorList>
            <person name="Shinozaki K."/>
            <person name="Deno H."/>
            <person name="Sugita M."/>
            <person name="Kuramitsu S."/>
            <person name="Sugiura M."/>
        </authorList>
    </citation>
    <scope>NUCLEOTIDE SEQUENCE [GENOMIC DNA]</scope>
</reference>
<geneLocation type="chloroplast"/>
<gene>
    <name evidence="1" type="primary">rps16</name>
</gene>
<name>RR16_TOBAC</name>
<feature type="chain" id="PRO_0000167322" description="Small ribosomal subunit protein bS16c">
    <location>
        <begin position="1"/>
        <end position="85"/>
    </location>
</feature>
<sequence length="85" mass="9921">MVKLRLKRCGRKQRAVYRIVAIDVRSRREGKDLRKVGFYDPIKNQTYLNVPAILYFLEKGAQPTGTVQDILKKAEVFKELRPNQS</sequence>
<accession>P06374</accession>
<proteinExistence type="inferred from homology"/>
<dbReference type="EMBL" id="Z00044">
    <property type="protein sequence ID" value="CAA77340.1"/>
    <property type="molecule type" value="Genomic_DNA"/>
</dbReference>
<dbReference type="EMBL" id="X03415">
    <property type="protein sequence ID" value="CAA27149.1"/>
    <property type="molecule type" value="Genomic_DNA"/>
</dbReference>
<dbReference type="PIR" id="A02739">
    <property type="entry name" value="R3NT16"/>
</dbReference>
<dbReference type="RefSeq" id="NP_054479.1">
    <property type="nucleotide sequence ID" value="NC_001879.2"/>
</dbReference>
<dbReference type="SMR" id="P06374"/>
<dbReference type="GeneID" id="800493"/>
<dbReference type="KEGG" id="nta:800493"/>
<dbReference type="OMA" id="KQPIYRI"/>
<dbReference type="OrthoDB" id="407221at2759"/>
<dbReference type="Proteomes" id="UP000084051">
    <property type="component" value="Unplaced"/>
</dbReference>
<dbReference type="GO" id="GO:0009507">
    <property type="term" value="C:chloroplast"/>
    <property type="evidence" value="ECO:0007669"/>
    <property type="project" value="UniProtKB-SubCell"/>
</dbReference>
<dbReference type="GO" id="GO:1990904">
    <property type="term" value="C:ribonucleoprotein complex"/>
    <property type="evidence" value="ECO:0007669"/>
    <property type="project" value="UniProtKB-KW"/>
</dbReference>
<dbReference type="GO" id="GO:0005840">
    <property type="term" value="C:ribosome"/>
    <property type="evidence" value="ECO:0007669"/>
    <property type="project" value="UniProtKB-KW"/>
</dbReference>
<dbReference type="GO" id="GO:0003735">
    <property type="term" value="F:structural constituent of ribosome"/>
    <property type="evidence" value="ECO:0007669"/>
    <property type="project" value="InterPro"/>
</dbReference>
<dbReference type="GO" id="GO:0006412">
    <property type="term" value="P:translation"/>
    <property type="evidence" value="ECO:0007669"/>
    <property type="project" value="UniProtKB-UniRule"/>
</dbReference>
<dbReference type="FunFam" id="3.30.1320.10:FF:000003">
    <property type="entry name" value="30S ribosomal protein S16, chloroplastic"/>
    <property type="match status" value="1"/>
</dbReference>
<dbReference type="Gene3D" id="3.30.1320.10">
    <property type="match status" value="1"/>
</dbReference>
<dbReference type="HAMAP" id="MF_00385">
    <property type="entry name" value="Ribosomal_bS16"/>
    <property type="match status" value="1"/>
</dbReference>
<dbReference type="InterPro" id="IPR000307">
    <property type="entry name" value="Ribosomal_bS16"/>
</dbReference>
<dbReference type="InterPro" id="IPR020592">
    <property type="entry name" value="Ribosomal_bS16_CS"/>
</dbReference>
<dbReference type="InterPro" id="IPR023803">
    <property type="entry name" value="Ribosomal_bS16_dom_sf"/>
</dbReference>
<dbReference type="NCBIfam" id="TIGR00002">
    <property type="entry name" value="S16"/>
    <property type="match status" value="1"/>
</dbReference>
<dbReference type="PANTHER" id="PTHR12919">
    <property type="entry name" value="30S RIBOSOMAL PROTEIN S16"/>
    <property type="match status" value="1"/>
</dbReference>
<dbReference type="PANTHER" id="PTHR12919:SF20">
    <property type="entry name" value="SMALL RIBOSOMAL SUBUNIT PROTEIN BS16M"/>
    <property type="match status" value="1"/>
</dbReference>
<dbReference type="Pfam" id="PF00886">
    <property type="entry name" value="Ribosomal_S16"/>
    <property type="match status" value="1"/>
</dbReference>
<dbReference type="SUPFAM" id="SSF54565">
    <property type="entry name" value="Ribosomal protein S16"/>
    <property type="match status" value="1"/>
</dbReference>
<dbReference type="PROSITE" id="PS00732">
    <property type="entry name" value="RIBOSOMAL_S16"/>
    <property type="match status" value="1"/>
</dbReference>
<evidence type="ECO:0000255" key="1">
    <source>
        <dbReference type="HAMAP-Rule" id="MF_00385"/>
    </source>
</evidence>
<evidence type="ECO:0000305" key="2"/>